<comment type="function">
    <text evidence="1">Catalyzes the attachment of serine to tRNA(Ser). Is also able to aminoacylate tRNA(Sec) with serine, to form the misacylated tRNA L-seryl-tRNA(Sec), which will be further converted into selenocysteinyl-tRNA(Sec).</text>
</comment>
<comment type="catalytic activity">
    <reaction evidence="1">
        <text>tRNA(Ser) + L-serine + ATP = L-seryl-tRNA(Ser) + AMP + diphosphate + H(+)</text>
        <dbReference type="Rhea" id="RHEA:12292"/>
        <dbReference type="Rhea" id="RHEA-COMP:9669"/>
        <dbReference type="Rhea" id="RHEA-COMP:9703"/>
        <dbReference type="ChEBI" id="CHEBI:15378"/>
        <dbReference type="ChEBI" id="CHEBI:30616"/>
        <dbReference type="ChEBI" id="CHEBI:33019"/>
        <dbReference type="ChEBI" id="CHEBI:33384"/>
        <dbReference type="ChEBI" id="CHEBI:78442"/>
        <dbReference type="ChEBI" id="CHEBI:78533"/>
        <dbReference type="ChEBI" id="CHEBI:456215"/>
        <dbReference type="EC" id="6.1.1.11"/>
    </reaction>
</comment>
<comment type="catalytic activity">
    <reaction evidence="1">
        <text>tRNA(Sec) + L-serine + ATP = L-seryl-tRNA(Sec) + AMP + diphosphate + H(+)</text>
        <dbReference type="Rhea" id="RHEA:42580"/>
        <dbReference type="Rhea" id="RHEA-COMP:9742"/>
        <dbReference type="Rhea" id="RHEA-COMP:10128"/>
        <dbReference type="ChEBI" id="CHEBI:15378"/>
        <dbReference type="ChEBI" id="CHEBI:30616"/>
        <dbReference type="ChEBI" id="CHEBI:33019"/>
        <dbReference type="ChEBI" id="CHEBI:33384"/>
        <dbReference type="ChEBI" id="CHEBI:78442"/>
        <dbReference type="ChEBI" id="CHEBI:78533"/>
        <dbReference type="ChEBI" id="CHEBI:456215"/>
        <dbReference type="EC" id="6.1.1.11"/>
    </reaction>
</comment>
<comment type="pathway">
    <text evidence="1">Aminoacyl-tRNA biosynthesis; selenocysteinyl-tRNA(Sec) biosynthesis; L-seryl-tRNA(Sec) from L-serine and tRNA(Sec): step 1/1.</text>
</comment>
<comment type="subunit">
    <text evidence="1">Homodimer. The tRNA molecule binds across the dimer.</text>
</comment>
<comment type="subcellular location">
    <subcellularLocation>
        <location evidence="1">Cytoplasm</location>
    </subcellularLocation>
</comment>
<comment type="domain">
    <text evidence="1">Consists of two distinct domains, a catalytic core and a N-terminal extension that is involved in tRNA binding.</text>
</comment>
<comment type="similarity">
    <text evidence="1">Belongs to the class-II aminoacyl-tRNA synthetase family. Type-1 seryl-tRNA synthetase subfamily.</text>
</comment>
<accession>Q21K22</accession>
<sequence length="426" mass="47699">MLDPKLLRNQLNDVAENLKKRGYELDTQAFTALEERRRTLQTACESLQQERNTRSKNIGKAKAAGEDIGPLLQEVDNLKSALAEAEQNLQALQGELEALVSAIPNMVHDDVPAGKSEDDNVEISKWGEPKTFDFEVQDHVDVGAAIGGLDFETATKITGARFSLMRGDIASMHRALTQLMLNTHIDEHKYEEVYVPYIVNKDSLYGTGQLPKFEEDLFKLTDDREFYLIPTAEVPVTNIARGEIFDESQLPVRFVAHTPCFRSEAGSYGRDTRGMIRQHQFEKVELVQLVKPEDSLNALEELTQHAEAILQKLGLPYRKVVLCGGDIGFSATKTYDLEVWIPSQGKYREISSCSCFGDFQARRMMARYRNSETNKPELLHTINGSGLAVGRTLVAVLENYQREDGSVEIPAALQPYMNGKTVIAKA</sequence>
<organism>
    <name type="scientific">Saccharophagus degradans (strain 2-40 / ATCC 43961 / DSM 17024)</name>
    <dbReference type="NCBI Taxonomy" id="203122"/>
    <lineage>
        <taxon>Bacteria</taxon>
        <taxon>Pseudomonadati</taxon>
        <taxon>Pseudomonadota</taxon>
        <taxon>Gammaproteobacteria</taxon>
        <taxon>Cellvibrionales</taxon>
        <taxon>Cellvibrionaceae</taxon>
        <taxon>Saccharophagus</taxon>
    </lineage>
</organism>
<reference key="1">
    <citation type="journal article" date="2008" name="PLoS Genet.">
        <title>Complete genome sequence of the complex carbohydrate-degrading marine bacterium, Saccharophagus degradans strain 2-40 T.</title>
        <authorList>
            <person name="Weiner R.M."/>
            <person name="Taylor L.E. II"/>
            <person name="Henrissat B."/>
            <person name="Hauser L."/>
            <person name="Land M."/>
            <person name="Coutinho P.M."/>
            <person name="Rancurel C."/>
            <person name="Saunders E.H."/>
            <person name="Longmire A.G."/>
            <person name="Zhang H."/>
            <person name="Bayer E.A."/>
            <person name="Gilbert H.J."/>
            <person name="Larimer F."/>
            <person name="Zhulin I.B."/>
            <person name="Ekborg N.A."/>
            <person name="Lamed R."/>
            <person name="Richardson P.M."/>
            <person name="Borovok I."/>
            <person name="Hutcheson S."/>
        </authorList>
    </citation>
    <scope>NUCLEOTIDE SEQUENCE [LARGE SCALE GENOMIC DNA]</scope>
    <source>
        <strain>2-40 / ATCC 43961 / DSM 17024</strain>
    </source>
</reference>
<evidence type="ECO:0000255" key="1">
    <source>
        <dbReference type="HAMAP-Rule" id="MF_00176"/>
    </source>
</evidence>
<proteinExistence type="inferred from homology"/>
<protein>
    <recommendedName>
        <fullName evidence="1">Serine--tRNA ligase</fullName>
        <ecNumber evidence="1">6.1.1.11</ecNumber>
    </recommendedName>
    <alternativeName>
        <fullName evidence="1">Seryl-tRNA synthetase</fullName>
        <shortName evidence="1">SerRS</shortName>
    </alternativeName>
    <alternativeName>
        <fullName evidence="1">Seryl-tRNA(Ser/Sec) synthetase</fullName>
    </alternativeName>
</protein>
<name>SYS_SACD2</name>
<keyword id="KW-0030">Aminoacyl-tRNA synthetase</keyword>
<keyword id="KW-0067">ATP-binding</keyword>
<keyword id="KW-0963">Cytoplasm</keyword>
<keyword id="KW-0436">Ligase</keyword>
<keyword id="KW-0547">Nucleotide-binding</keyword>
<keyword id="KW-0648">Protein biosynthesis</keyword>
<keyword id="KW-1185">Reference proteome</keyword>
<gene>
    <name evidence="1" type="primary">serS</name>
    <name type="ordered locus">Sde_1697</name>
</gene>
<feature type="chain" id="PRO_1000019805" description="Serine--tRNA ligase">
    <location>
        <begin position="1"/>
        <end position="426"/>
    </location>
</feature>
<feature type="binding site" evidence="1">
    <location>
        <begin position="231"/>
        <end position="233"/>
    </location>
    <ligand>
        <name>L-serine</name>
        <dbReference type="ChEBI" id="CHEBI:33384"/>
    </ligand>
</feature>
<feature type="binding site" evidence="1">
    <location>
        <begin position="262"/>
        <end position="264"/>
    </location>
    <ligand>
        <name>ATP</name>
        <dbReference type="ChEBI" id="CHEBI:30616"/>
    </ligand>
</feature>
<feature type="binding site" evidence="1">
    <location>
        <position position="285"/>
    </location>
    <ligand>
        <name>L-serine</name>
        <dbReference type="ChEBI" id="CHEBI:33384"/>
    </ligand>
</feature>
<feature type="binding site" evidence="1">
    <location>
        <begin position="349"/>
        <end position="352"/>
    </location>
    <ligand>
        <name>ATP</name>
        <dbReference type="ChEBI" id="CHEBI:30616"/>
    </ligand>
</feature>
<feature type="binding site" evidence="1">
    <location>
        <position position="385"/>
    </location>
    <ligand>
        <name>L-serine</name>
        <dbReference type="ChEBI" id="CHEBI:33384"/>
    </ligand>
</feature>
<dbReference type="EC" id="6.1.1.11" evidence="1"/>
<dbReference type="EMBL" id="CP000282">
    <property type="protein sequence ID" value="ABD80957.1"/>
    <property type="molecule type" value="Genomic_DNA"/>
</dbReference>
<dbReference type="RefSeq" id="WP_011468177.1">
    <property type="nucleotide sequence ID" value="NC_007912.1"/>
</dbReference>
<dbReference type="SMR" id="Q21K22"/>
<dbReference type="STRING" id="203122.Sde_1697"/>
<dbReference type="GeneID" id="98613372"/>
<dbReference type="KEGG" id="sde:Sde_1697"/>
<dbReference type="eggNOG" id="COG0172">
    <property type="taxonomic scope" value="Bacteria"/>
</dbReference>
<dbReference type="HOGENOM" id="CLU_023797_0_1_6"/>
<dbReference type="OrthoDB" id="9804647at2"/>
<dbReference type="UniPathway" id="UPA00906">
    <property type="reaction ID" value="UER00895"/>
</dbReference>
<dbReference type="Proteomes" id="UP000001947">
    <property type="component" value="Chromosome"/>
</dbReference>
<dbReference type="GO" id="GO:0005737">
    <property type="term" value="C:cytoplasm"/>
    <property type="evidence" value="ECO:0007669"/>
    <property type="project" value="UniProtKB-SubCell"/>
</dbReference>
<dbReference type="GO" id="GO:0005524">
    <property type="term" value="F:ATP binding"/>
    <property type="evidence" value="ECO:0007669"/>
    <property type="project" value="UniProtKB-UniRule"/>
</dbReference>
<dbReference type="GO" id="GO:0004828">
    <property type="term" value="F:serine-tRNA ligase activity"/>
    <property type="evidence" value="ECO:0007669"/>
    <property type="project" value="UniProtKB-UniRule"/>
</dbReference>
<dbReference type="GO" id="GO:0016260">
    <property type="term" value="P:selenocysteine biosynthetic process"/>
    <property type="evidence" value="ECO:0007669"/>
    <property type="project" value="UniProtKB-UniRule"/>
</dbReference>
<dbReference type="GO" id="GO:0006434">
    <property type="term" value="P:seryl-tRNA aminoacylation"/>
    <property type="evidence" value="ECO:0007669"/>
    <property type="project" value="UniProtKB-UniRule"/>
</dbReference>
<dbReference type="CDD" id="cd00770">
    <property type="entry name" value="SerRS_core"/>
    <property type="match status" value="1"/>
</dbReference>
<dbReference type="Gene3D" id="3.30.930.10">
    <property type="entry name" value="Bira Bifunctional Protein, Domain 2"/>
    <property type="match status" value="1"/>
</dbReference>
<dbReference type="Gene3D" id="1.10.287.40">
    <property type="entry name" value="Serine-tRNA synthetase, tRNA binding domain"/>
    <property type="match status" value="1"/>
</dbReference>
<dbReference type="HAMAP" id="MF_00176">
    <property type="entry name" value="Ser_tRNA_synth_type1"/>
    <property type="match status" value="1"/>
</dbReference>
<dbReference type="InterPro" id="IPR002314">
    <property type="entry name" value="aa-tRNA-synt_IIb"/>
</dbReference>
<dbReference type="InterPro" id="IPR006195">
    <property type="entry name" value="aa-tRNA-synth_II"/>
</dbReference>
<dbReference type="InterPro" id="IPR045864">
    <property type="entry name" value="aa-tRNA-synth_II/BPL/LPL"/>
</dbReference>
<dbReference type="InterPro" id="IPR002317">
    <property type="entry name" value="Ser-tRNA-ligase_type_1"/>
</dbReference>
<dbReference type="InterPro" id="IPR015866">
    <property type="entry name" value="Ser-tRNA-synth_1_N"/>
</dbReference>
<dbReference type="InterPro" id="IPR042103">
    <property type="entry name" value="SerRS_1_N_sf"/>
</dbReference>
<dbReference type="InterPro" id="IPR033729">
    <property type="entry name" value="SerRS_core"/>
</dbReference>
<dbReference type="InterPro" id="IPR010978">
    <property type="entry name" value="tRNA-bd_arm"/>
</dbReference>
<dbReference type="NCBIfam" id="TIGR00414">
    <property type="entry name" value="serS"/>
    <property type="match status" value="1"/>
</dbReference>
<dbReference type="PANTHER" id="PTHR43697:SF1">
    <property type="entry name" value="SERINE--TRNA LIGASE"/>
    <property type="match status" value="1"/>
</dbReference>
<dbReference type="PANTHER" id="PTHR43697">
    <property type="entry name" value="SERYL-TRNA SYNTHETASE"/>
    <property type="match status" value="1"/>
</dbReference>
<dbReference type="Pfam" id="PF02403">
    <property type="entry name" value="Seryl_tRNA_N"/>
    <property type="match status" value="1"/>
</dbReference>
<dbReference type="Pfam" id="PF00587">
    <property type="entry name" value="tRNA-synt_2b"/>
    <property type="match status" value="1"/>
</dbReference>
<dbReference type="PIRSF" id="PIRSF001529">
    <property type="entry name" value="Ser-tRNA-synth_IIa"/>
    <property type="match status" value="1"/>
</dbReference>
<dbReference type="PRINTS" id="PR00981">
    <property type="entry name" value="TRNASYNTHSER"/>
</dbReference>
<dbReference type="SUPFAM" id="SSF55681">
    <property type="entry name" value="Class II aaRS and biotin synthetases"/>
    <property type="match status" value="1"/>
</dbReference>
<dbReference type="SUPFAM" id="SSF46589">
    <property type="entry name" value="tRNA-binding arm"/>
    <property type="match status" value="1"/>
</dbReference>
<dbReference type="PROSITE" id="PS50862">
    <property type="entry name" value="AA_TRNA_LIGASE_II"/>
    <property type="match status" value="1"/>
</dbReference>